<comment type="function">
    <text evidence="1">DNA repair enzyme involved in the repair of deaminated bases. Selectively cleaves double-stranded DNA at the second phosphodiester bond 3' to a deoxyinosine leaving behind the intact lesion on the nicked DNA.</text>
</comment>
<comment type="catalytic activity">
    <reaction evidence="1">
        <text>Endonucleolytic cleavage at apurinic or apyrimidinic sites to products with a 5'-phosphate.</text>
        <dbReference type="EC" id="3.1.21.7"/>
    </reaction>
</comment>
<comment type="cofactor">
    <cofactor evidence="1">
        <name>Mg(2+)</name>
        <dbReference type="ChEBI" id="CHEBI:18420"/>
    </cofactor>
</comment>
<comment type="subcellular location">
    <subcellularLocation>
        <location evidence="1">Cytoplasm</location>
    </subcellularLocation>
</comment>
<comment type="similarity">
    <text evidence="1">Belongs to the endonuclease V family.</text>
</comment>
<protein>
    <recommendedName>
        <fullName evidence="1">Endonuclease V</fullName>
        <ecNumber evidence="1">3.1.21.7</ecNumber>
    </recommendedName>
    <alternativeName>
        <fullName evidence="1">Deoxyinosine 3'endonuclease</fullName>
    </alternativeName>
    <alternativeName>
        <fullName evidence="1">Deoxyribonuclease V</fullName>
        <shortName evidence="1">DNase V</shortName>
    </alternativeName>
</protein>
<accession>Q4UWV2</accession>
<keyword id="KW-0963">Cytoplasm</keyword>
<keyword id="KW-0227">DNA damage</keyword>
<keyword id="KW-0234">DNA repair</keyword>
<keyword id="KW-0255">Endonuclease</keyword>
<keyword id="KW-0378">Hydrolase</keyword>
<keyword id="KW-0460">Magnesium</keyword>
<keyword id="KW-0479">Metal-binding</keyword>
<keyword id="KW-0540">Nuclease</keyword>
<proteinExistence type="inferred from homology"/>
<evidence type="ECO:0000255" key="1">
    <source>
        <dbReference type="HAMAP-Rule" id="MF_00801"/>
    </source>
</evidence>
<reference key="1">
    <citation type="journal article" date="2005" name="Genome Res.">
        <title>Comparative and functional genomic analyses of the pathogenicity of phytopathogen Xanthomonas campestris pv. campestris.</title>
        <authorList>
            <person name="Qian W."/>
            <person name="Jia Y."/>
            <person name="Ren S.-X."/>
            <person name="He Y.-Q."/>
            <person name="Feng J.-X."/>
            <person name="Lu L.-F."/>
            <person name="Sun Q."/>
            <person name="Ying G."/>
            <person name="Tang D.-J."/>
            <person name="Tang H."/>
            <person name="Wu W."/>
            <person name="Hao P."/>
            <person name="Wang L."/>
            <person name="Jiang B.-L."/>
            <person name="Zeng S."/>
            <person name="Gu W.-Y."/>
            <person name="Lu G."/>
            <person name="Rong L."/>
            <person name="Tian Y."/>
            <person name="Yao Z."/>
            <person name="Fu G."/>
            <person name="Chen B."/>
            <person name="Fang R."/>
            <person name="Qiang B."/>
            <person name="Chen Z."/>
            <person name="Zhao G.-P."/>
            <person name="Tang J.-L."/>
            <person name="He C."/>
        </authorList>
    </citation>
    <scope>NUCLEOTIDE SEQUENCE [LARGE SCALE GENOMIC DNA]</scope>
    <source>
        <strain>8004</strain>
    </source>
</reference>
<dbReference type="EC" id="3.1.21.7" evidence="1"/>
<dbReference type="EMBL" id="CP000050">
    <property type="protein sequence ID" value="AAY48471.1"/>
    <property type="molecule type" value="Genomic_DNA"/>
</dbReference>
<dbReference type="RefSeq" id="WP_011037843.1">
    <property type="nucleotide sequence ID" value="NZ_CP155948.1"/>
</dbReference>
<dbReference type="SMR" id="Q4UWV2"/>
<dbReference type="DNASU" id="999574"/>
<dbReference type="KEGG" id="xcb:XC_1403"/>
<dbReference type="HOGENOM" id="CLU_047631_1_0_6"/>
<dbReference type="Proteomes" id="UP000000420">
    <property type="component" value="Chromosome"/>
</dbReference>
<dbReference type="GO" id="GO:0005737">
    <property type="term" value="C:cytoplasm"/>
    <property type="evidence" value="ECO:0007669"/>
    <property type="project" value="UniProtKB-SubCell"/>
</dbReference>
<dbReference type="GO" id="GO:0043737">
    <property type="term" value="F:deoxyribonuclease V activity"/>
    <property type="evidence" value="ECO:0007669"/>
    <property type="project" value="UniProtKB-UniRule"/>
</dbReference>
<dbReference type="GO" id="GO:0000287">
    <property type="term" value="F:magnesium ion binding"/>
    <property type="evidence" value="ECO:0007669"/>
    <property type="project" value="UniProtKB-UniRule"/>
</dbReference>
<dbReference type="GO" id="GO:0016891">
    <property type="term" value="F:RNA endonuclease activity, producing 5'-phosphomonoesters"/>
    <property type="evidence" value="ECO:0007669"/>
    <property type="project" value="TreeGrafter"/>
</dbReference>
<dbReference type="GO" id="GO:0003727">
    <property type="term" value="F:single-stranded RNA binding"/>
    <property type="evidence" value="ECO:0007669"/>
    <property type="project" value="TreeGrafter"/>
</dbReference>
<dbReference type="GO" id="GO:0006281">
    <property type="term" value="P:DNA repair"/>
    <property type="evidence" value="ECO:0007669"/>
    <property type="project" value="UniProtKB-UniRule"/>
</dbReference>
<dbReference type="CDD" id="cd06559">
    <property type="entry name" value="Endonuclease_V"/>
    <property type="match status" value="1"/>
</dbReference>
<dbReference type="FunFam" id="3.30.2170.10:FF:000001">
    <property type="entry name" value="Endonuclease V"/>
    <property type="match status" value="1"/>
</dbReference>
<dbReference type="Gene3D" id="3.30.2170.10">
    <property type="entry name" value="archaeoglobus fulgidus dsm 4304 superfamily"/>
    <property type="match status" value="1"/>
</dbReference>
<dbReference type="HAMAP" id="MF_00801">
    <property type="entry name" value="Endonuclease_5"/>
    <property type="match status" value="1"/>
</dbReference>
<dbReference type="InterPro" id="IPR007581">
    <property type="entry name" value="Endonuclease-V"/>
</dbReference>
<dbReference type="NCBIfam" id="NF008629">
    <property type="entry name" value="PRK11617.1"/>
    <property type="match status" value="1"/>
</dbReference>
<dbReference type="PANTHER" id="PTHR28511">
    <property type="entry name" value="ENDONUCLEASE V"/>
    <property type="match status" value="1"/>
</dbReference>
<dbReference type="PANTHER" id="PTHR28511:SF1">
    <property type="entry name" value="ENDONUCLEASE V"/>
    <property type="match status" value="1"/>
</dbReference>
<dbReference type="Pfam" id="PF04493">
    <property type="entry name" value="Endonuclease_5"/>
    <property type="match status" value="1"/>
</dbReference>
<gene>
    <name evidence="1" type="primary">nfi</name>
    <name type="ordered locus">XC_1403</name>
</gene>
<feature type="chain" id="PRO_1000047008" description="Endonuclease V">
    <location>
        <begin position="1"/>
        <end position="236"/>
    </location>
</feature>
<feature type="binding site" evidence="1">
    <location>
        <position position="47"/>
    </location>
    <ligand>
        <name>Mg(2+)</name>
        <dbReference type="ChEBI" id="CHEBI:18420"/>
    </ligand>
</feature>
<feature type="binding site" evidence="1">
    <location>
        <position position="115"/>
    </location>
    <ligand>
        <name>Mg(2+)</name>
        <dbReference type="ChEBI" id="CHEBI:18420"/>
    </ligand>
</feature>
<feature type="site" description="Interaction with target DNA" evidence="1">
    <location>
        <position position="85"/>
    </location>
</feature>
<sequence length="236" mass="25452">MQTSIDPVFAGWDGSVAQARQLQQQLAQRVALRDEVSAAPALLAGFDVGFEDDGQTTRAAAVLLDAQTLLPLETHVARVPTSMPYVPGLLSFRELPALLRALALLARTPDLVFIDGQGIAHPRRFGIAAHFGVVTGLPSIGVAKQRLAGTFIEPGGERGDHSPILLAGAQIGWALRSKPRCNPLIVSPGHRVSMQGALDWTLRTLRAYRLPEPTRLADRLASRRGEIELQTQPTLL</sequence>
<organism>
    <name type="scientific">Xanthomonas campestris pv. campestris (strain 8004)</name>
    <dbReference type="NCBI Taxonomy" id="314565"/>
    <lineage>
        <taxon>Bacteria</taxon>
        <taxon>Pseudomonadati</taxon>
        <taxon>Pseudomonadota</taxon>
        <taxon>Gammaproteobacteria</taxon>
        <taxon>Lysobacterales</taxon>
        <taxon>Lysobacteraceae</taxon>
        <taxon>Xanthomonas</taxon>
    </lineage>
</organism>
<name>NFI_XANC8</name>